<evidence type="ECO:0000255" key="1">
    <source>
        <dbReference type="HAMAP-Rule" id="MF_01334"/>
    </source>
</evidence>
<evidence type="ECO:0000305" key="2"/>
<proteinExistence type="inferred from homology"/>
<dbReference type="EMBL" id="CP000025">
    <property type="protein sequence ID" value="AAW34945.1"/>
    <property type="molecule type" value="Genomic_DNA"/>
</dbReference>
<dbReference type="RefSeq" id="WP_002791314.1">
    <property type="nucleotide sequence ID" value="NC_003912.7"/>
</dbReference>
<dbReference type="SMR" id="Q5HWG0"/>
<dbReference type="KEGG" id="cjr:CJE0356"/>
<dbReference type="HOGENOM" id="CLU_075939_2_2_7"/>
<dbReference type="GO" id="GO:0022625">
    <property type="term" value="C:cytosolic large ribosomal subunit"/>
    <property type="evidence" value="ECO:0007669"/>
    <property type="project" value="TreeGrafter"/>
</dbReference>
<dbReference type="GO" id="GO:0008097">
    <property type="term" value="F:5S rRNA binding"/>
    <property type="evidence" value="ECO:0007669"/>
    <property type="project" value="InterPro"/>
</dbReference>
<dbReference type="GO" id="GO:0003735">
    <property type="term" value="F:structural constituent of ribosome"/>
    <property type="evidence" value="ECO:0007669"/>
    <property type="project" value="InterPro"/>
</dbReference>
<dbReference type="GO" id="GO:0006412">
    <property type="term" value="P:translation"/>
    <property type="evidence" value="ECO:0007669"/>
    <property type="project" value="UniProtKB-UniRule"/>
</dbReference>
<dbReference type="CDD" id="cd00495">
    <property type="entry name" value="Ribosomal_L25_TL5_CTC"/>
    <property type="match status" value="1"/>
</dbReference>
<dbReference type="Gene3D" id="2.170.120.20">
    <property type="entry name" value="Ribosomal protein L25, beta domain"/>
    <property type="match status" value="1"/>
</dbReference>
<dbReference type="Gene3D" id="2.40.240.10">
    <property type="entry name" value="Ribosomal Protein L25, Chain P"/>
    <property type="match status" value="1"/>
</dbReference>
<dbReference type="HAMAP" id="MF_01334">
    <property type="entry name" value="Ribosomal_bL25_CTC"/>
    <property type="match status" value="1"/>
</dbReference>
<dbReference type="InterPro" id="IPR020056">
    <property type="entry name" value="Rbsml_bL25/Gln-tRNA_synth_N"/>
</dbReference>
<dbReference type="InterPro" id="IPR011035">
    <property type="entry name" value="Ribosomal_bL25/Gln-tRNA_synth"/>
</dbReference>
<dbReference type="InterPro" id="IPR020057">
    <property type="entry name" value="Ribosomal_bL25_b-dom"/>
</dbReference>
<dbReference type="InterPro" id="IPR037121">
    <property type="entry name" value="Ribosomal_bL25_C"/>
</dbReference>
<dbReference type="InterPro" id="IPR001021">
    <property type="entry name" value="Ribosomal_bL25_long"/>
</dbReference>
<dbReference type="InterPro" id="IPR029751">
    <property type="entry name" value="Ribosomal_L25_dom"/>
</dbReference>
<dbReference type="InterPro" id="IPR020930">
    <property type="entry name" value="Ribosomal_uL5_bac-type"/>
</dbReference>
<dbReference type="NCBIfam" id="TIGR00731">
    <property type="entry name" value="bL25_bact_ctc"/>
    <property type="match status" value="1"/>
</dbReference>
<dbReference type="NCBIfam" id="NF004129">
    <property type="entry name" value="PRK05618.1-4"/>
    <property type="match status" value="1"/>
</dbReference>
<dbReference type="PANTHER" id="PTHR33284">
    <property type="entry name" value="RIBOSOMAL PROTEIN L25/GLN-TRNA SYNTHETASE, ANTI-CODON-BINDING DOMAIN-CONTAINING PROTEIN"/>
    <property type="match status" value="1"/>
</dbReference>
<dbReference type="PANTHER" id="PTHR33284:SF1">
    <property type="entry name" value="RIBOSOMAL PROTEIN L25_GLN-TRNA SYNTHETASE, ANTI-CODON-BINDING DOMAIN-CONTAINING PROTEIN"/>
    <property type="match status" value="1"/>
</dbReference>
<dbReference type="Pfam" id="PF01386">
    <property type="entry name" value="Ribosomal_L25p"/>
    <property type="match status" value="1"/>
</dbReference>
<dbReference type="Pfam" id="PF14693">
    <property type="entry name" value="Ribosomal_TL5_C"/>
    <property type="match status" value="1"/>
</dbReference>
<dbReference type="SUPFAM" id="SSF50715">
    <property type="entry name" value="Ribosomal protein L25-like"/>
    <property type="match status" value="1"/>
</dbReference>
<organism>
    <name type="scientific">Campylobacter jejuni (strain RM1221)</name>
    <dbReference type="NCBI Taxonomy" id="195099"/>
    <lineage>
        <taxon>Bacteria</taxon>
        <taxon>Pseudomonadati</taxon>
        <taxon>Campylobacterota</taxon>
        <taxon>Epsilonproteobacteria</taxon>
        <taxon>Campylobacterales</taxon>
        <taxon>Campylobacteraceae</taxon>
        <taxon>Campylobacter</taxon>
    </lineage>
</organism>
<gene>
    <name evidence="1" type="primary">rplY</name>
    <name evidence="1" type="synonym">ctc</name>
    <name type="ordered locus">CJE0356</name>
</gene>
<name>RL25_CAMJR</name>
<accession>Q5HWG0</accession>
<sequence length="178" mass="19461">MLEGIVRESIGRKAAKALKRDGYLIANIYGKGLENINAAFKVNEFIKEVRKKTTLIFDVKVGSQTLSVVVVDYQKDPVTAELKHVDLKVAQKGVISKYMVPVKITGTAIGLKNKGVLIQSKRRLKVKCAAENLPNFFELDVSKLDVGDALLVRDIVVPAGVTMIDADRVAVVGVEKAR</sequence>
<protein>
    <recommendedName>
        <fullName evidence="1">Large ribosomal subunit protein bL25</fullName>
    </recommendedName>
    <alternativeName>
        <fullName evidence="2">50S ribosomal protein L25</fullName>
    </alternativeName>
    <alternativeName>
        <fullName evidence="1">General stress protein CTC</fullName>
    </alternativeName>
</protein>
<keyword id="KW-0687">Ribonucleoprotein</keyword>
<keyword id="KW-0689">Ribosomal protein</keyword>
<keyword id="KW-0694">RNA-binding</keyword>
<keyword id="KW-0699">rRNA-binding</keyword>
<feature type="chain" id="PRO_0000181530" description="Large ribosomal subunit protein bL25">
    <location>
        <begin position="1"/>
        <end position="178"/>
    </location>
</feature>
<comment type="function">
    <text evidence="1">This is one of the proteins that binds to the 5S RNA in the ribosome where it forms part of the central protuberance.</text>
</comment>
<comment type="subunit">
    <text evidence="1">Part of the 50S ribosomal subunit; part of the 5S rRNA/L5/L18/L25 subcomplex. Contacts the 5S rRNA. Binds to the 5S rRNA independently of L5 and L18.</text>
</comment>
<comment type="similarity">
    <text evidence="1">Belongs to the bacterial ribosomal protein bL25 family. CTC subfamily.</text>
</comment>
<reference key="1">
    <citation type="journal article" date="2005" name="PLoS Biol.">
        <title>Major structural differences and novel potential virulence mechanisms from the genomes of multiple Campylobacter species.</title>
        <authorList>
            <person name="Fouts D.E."/>
            <person name="Mongodin E.F."/>
            <person name="Mandrell R.E."/>
            <person name="Miller W.G."/>
            <person name="Rasko D.A."/>
            <person name="Ravel J."/>
            <person name="Brinkac L.M."/>
            <person name="DeBoy R.T."/>
            <person name="Parker C.T."/>
            <person name="Daugherty S.C."/>
            <person name="Dodson R.J."/>
            <person name="Durkin A.S."/>
            <person name="Madupu R."/>
            <person name="Sullivan S.A."/>
            <person name="Shetty J.U."/>
            <person name="Ayodeji M.A."/>
            <person name="Shvartsbeyn A."/>
            <person name="Schatz M.C."/>
            <person name="Badger J.H."/>
            <person name="Fraser C.M."/>
            <person name="Nelson K.E."/>
        </authorList>
    </citation>
    <scope>NUCLEOTIDE SEQUENCE [LARGE SCALE GENOMIC DNA]</scope>
    <source>
        <strain>RM1221</strain>
    </source>
</reference>